<sequence length="624" mass="69904">MSSSQAEGVIRNIIREISQTCLSRGQTLSETLIAFMVKAVVLDPTNHFNVDRTLTKQDVQKLIELCVDRLMDQTSPTLQTIKMQVYFDMNYTPRREFLEMQQKLLQSRLQSLSREITDSRAKSREDLKKLYGTIVHYIIQSSNLSSSTDINTVRETTAALQSIFPPSQLGSFMSLLKSDKEQQLKENSLIVSGIRLFNKDNGEGGEAIQSLPSILNEKLPGVVSDLERELASCERLCWQYTGLLELISERDTAHSQSPVPPRLLTQALYNTRQHEAFLRLTLADVILCAQEVTRLQSDLMSRMTLLRDAIHTKTTVPTTHVFPHFSAVGRLWAGLEQEMLLLSMLTNVASGLRVFLTAESLLTPDQMELPVRTDADRCSGTAEERVLVSETSSCECCFPESTADFQHLPLQYNGFCGVALVDRNGLLLPGNTSIGVLKHKEKYYAFSSRSAAYEFSCRADEYTAAVLETASRTPELIQLLQLQQHFTSSTAYSQLPAGHQSLTAGMPSGQKLLLKSISKSDAGVQTEIHPLQSNICTSYEWNEWEMRRKAIKLANLHSKVTRSSQSDWSLMRRHNSSQTFLPKDASCQTKRDGESLVPKAQVYLSSLRGAAGFRKVDLSRAVDE</sequence>
<proteinExistence type="evidence at transcript level"/>
<name>CF206_DANRE</name>
<reference key="1">
    <citation type="journal article" date="2004" name="Proc. Natl. Acad. Sci. U.S.A.">
        <title>Hematopoietic gene expression profile in zebrafish kidney marrow.</title>
        <authorList>
            <person name="Song H.-D."/>
            <person name="Sun X.-J."/>
            <person name="Deng M."/>
            <person name="Zhang G.-W."/>
            <person name="Zhou Y."/>
            <person name="Wu X.-Y."/>
            <person name="Sheng Y."/>
            <person name="Chen Y."/>
            <person name="Ruan Z."/>
            <person name="Jiang C.-L."/>
            <person name="Fan H.-Y."/>
            <person name="Zon L.I."/>
            <person name="Kanki J.P."/>
            <person name="Liu T.X."/>
            <person name="Look A.T."/>
            <person name="Chen Z."/>
        </authorList>
    </citation>
    <scope>NUCLEOTIDE SEQUENCE [LARGE SCALE MRNA] (ISOFORM 1)</scope>
    <source>
        <tissue>Kidney marrow</tissue>
    </source>
</reference>
<reference key="2">
    <citation type="submission" date="2007-02" db="EMBL/GenBank/DDBJ databases">
        <authorList>
            <consortium name="NIH - Zebrafish Gene Collection (ZGC) project"/>
        </authorList>
    </citation>
    <scope>NUCLEOTIDE SEQUENCE [LARGE SCALE MRNA] (ISOFORMS 1 AND 2)</scope>
    <source>
        <tissue>Testis</tissue>
    </source>
</reference>
<protein>
    <recommendedName>
        <fullName evidence="3">Cilia- and flagella-associated protein 206</fullName>
    </recommendedName>
</protein>
<keyword id="KW-0025">Alternative splicing</keyword>
<keyword id="KW-0966">Cell projection</keyword>
<keyword id="KW-0969">Cilium</keyword>
<keyword id="KW-0970">Cilium biogenesis/degradation</keyword>
<keyword id="KW-0963">Cytoplasm</keyword>
<keyword id="KW-0206">Cytoskeleton</keyword>
<keyword id="KW-1185">Reference proteome</keyword>
<organism>
    <name type="scientific">Danio rerio</name>
    <name type="common">Zebrafish</name>
    <name type="synonym">Brachydanio rerio</name>
    <dbReference type="NCBI Taxonomy" id="7955"/>
    <lineage>
        <taxon>Eukaryota</taxon>
        <taxon>Metazoa</taxon>
        <taxon>Chordata</taxon>
        <taxon>Craniata</taxon>
        <taxon>Vertebrata</taxon>
        <taxon>Euteleostomi</taxon>
        <taxon>Actinopterygii</taxon>
        <taxon>Neopterygii</taxon>
        <taxon>Teleostei</taxon>
        <taxon>Ostariophysi</taxon>
        <taxon>Cypriniformes</taxon>
        <taxon>Danionidae</taxon>
        <taxon>Danioninae</taxon>
        <taxon>Danio</taxon>
    </lineage>
</organism>
<gene>
    <name type="primary">cfap206</name>
    <name type="ORF">zgc:109719</name>
    <name type="ORF">zgc:136502</name>
</gene>
<feature type="chain" id="PRO_0000360149" description="Cilia- and flagella-associated protein 206">
    <location>
        <begin position="1"/>
        <end position="624"/>
    </location>
</feature>
<feature type="splice variant" id="VSP_036200" description="In isoform 2." evidence="2">
    <original>GEGGEAIQSL</original>
    <variation>V</variation>
    <location>
        <begin position="202"/>
        <end position="211"/>
    </location>
</feature>
<feature type="sequence conflict" description="In Ref. 2; AAI16563." evidence="3" ref="2">
    <original>G</original>
    <variation>R</variation>
    <location>
        <position position="221"/>
    </location>
</feature>
<feature type="sequence conflict" description="In Ref. 1; AAQ97751." evidence="3" ref="1">
    <original>L</original>
    <variation>Q</variation>
    <location>
        <position position="246"/>
    </location>
</feature>
<feature type="sequence conflict" description="In Ref. 2; AAI16563." evidence="3" ref="2">
    <original>S</original>
    <variation>L</variation>
    <location>
        <position position="393"/>
    </location>
</feature>
<feature type="sequence conflict" description="In Ref. 1; AAQ97751." evidence="3" ref="1">
    <original>E</original>
    <variation>D</variation>
    <location>
        <position position="400"/>
    </location>
</feature>
<feature type="sequence conflict" description="In Ref. 2; AAI16563." evidence="3" ref="2">
    <original>T</original>
    <variation>R</variation>
    <location>
        <position position="503"/>
    </location>
</feature>
<feature type="sequence conflict" description="In Ref. 1; AAQ97751." evidence="3" ref="1">
    <original>E</original>
    <variation>Q</variation>
    <location>
        <position position="594"/>
    </location>
</feature>
<feature type="sequence conflict" description="In Ref. 2; AAI16563." evidence="3" ref="2">
    <original>Q</original>
    <variation>K</variation>
    <location>
        <position position="601"/>
    </location>
</feature>
<feature type="sequence conflict" description="In Ref. 1; AAQ97751 and 2; AAI16563." evidence="3" ref="1 2">
    <original>S</original>
    <variation>G</variation>
    <location>
        <position position="606"/>
    </location>
</feature>
<evidence type="ECO:0000250" key="1">
    <source>
        <dbReference type="UniProtKB" id="Q6PE87"/>
    </source>
</evidence>
<evidence type="ECO:0000303" key="2">
    <source ref="2"/>
</evidence>
<evidence type="ECO:0000305" key="3"/>
<comment type="function">
    <text evidence="1">Essential for sperm motility and is involved in the regulation of the beating frequency of motile cilia on the epithelial cells of the respiratory tract (By similarity). Required for the establishment of radial spokes in sperm flagella (By similarity).</text>
</comment>
<comment type="subcellular location">
    <subcellularLocation>
        <location evidence="1">Cytoplasm</location>
        <location evidence="1">Cytoskeleton</location>
        <location evidence="1">Cilium axoneme</location>
    </subcellularLocation>
    <subcellularLocation>
        <location evidence="1">Cytoplasm</location>
        <location evidence="1">Cytoskeleton</location>
        <location evidence="1">Cilium basal body</location>
    </subcellularLocation>
</comment>
<comment type="alternative products">
    <event type="alternative splicing"/>
    <isoform>
        <id>A2RV06-1</id>
        <name>1</name>
        <sequence type="displayed"/>
    </isoform>
    <isoform>
        <id>A2RV06-2</id>
        <name>2</name>
        <sequence type="described" ref="VSP_036200"/>
    </isoform>
</comment>
<comment type="similarity">
    <text evidence="3">Belongs to the CFAP206 family.</text>
</comment>
<accession>A2RV06</accession>
<accession>Q1JPX5</accession>
<accession>Q6TH38</accession>
<dbReference type="EMBL" id="AY398318">
    <property type="protein sequence ID" value="AAQ97751.1"/>
    <property type="molecule type" value="mRNA"/>
</dbReference>
<dbReference type="EMBL" id="BC116562">
    <property type="protein sequence ID" value="AAI16563.1"/>
    <property type="molecule type" value="mRNA"/>
</dbReference>
<dbReference type="EMBL" id="BC133124">
    <property type="protein sequence ID" value="AAI33125.1"/>
    <property type="molecule type" value="mRNA"/>
</dbReference>
<dbReference type="RefSeq" id="NP_991180.1">
    <property type="nucleotide sequence ID" value="NM_205617.1"/>
</dbReference>
<dbReference type="SMR" id="A2RV06"/>
<dbReference type="FunCoup" id="A2RV06">
    <property type="interactions" value="411"/>
</dbReference>
<dbReference type="STRING" id="7955.ENSDARP00000033381"/>
<dbReference type="PaxDb" id="7955-ENSDARP00000033381"/>
<dbReference type="PeptideAtlas" id="A2RV06"/>
<dbReference type="Ensembl" id="ENSDART00000036373">
    <molecule id="A2RV06-1"/>
    <property type="protein sequence ID" value="ENSDARP00000033381"/>
    <property type="gene ID" value="ENSDARG00000021997"/>
</dbReference>
<dbReference type="GeneID" id="402910"/>
<dbReference type="KEGG" id="dre:402910"/>
<dbReference type="AGR" id="ZFIN:ZDB-GENE-050522-460"/>
<dbReference type="CTD" id="154313"/>
<dbReference type="ZFIN" id="ZDB-GENE-050522-460">
    <property type="gene designation" value="cfap206"/>
</dbReference>
<dbReference type="eggNOG" id="ENOG502QTGJ">
    <property type="taxonomic scope" value="Eukaryota"/>
</dbReference>
<dbReference type="HOGENOM" id="CLU_030061_0_0_1"/>
<dbReference type="InParanoid" id="A2RV06"/>
<dbReference type="OMA" id="QLMELMC"/>
<dbReference type="OrthoDB" id="10251073at2759"/>
<dbReference type="PhylomeDB" id="A2RV06"/>
<dbReference type="TreeFam" id="TF323439"/>
<dbReference type="PRO" id="PR:A2RV06"/>
<dbReference type="Proteomes" id="UP000000437">
    <property type="component" value="Chromosome 20"/>
</dbReference>
<dbReference type="Bgee" id="ENSDARG00000021997">
    <property type="expression patterns" value="Expressed in testis and 8 other cell types or tissues"/>
</dbReference>
<dbReference type="GO" id="GO:0005930">
    <property type="term" value="C:axoneme"/>
    <property type="evidence" value="ECO:0000250"/>
    <property type="project" value="UniProtKB"/>
</dbReference>
<dbReference type="GO" id="GO:0036064">
    <property type="term" value="C:ciliary basal body"/>
    <property type="evidence" value="ECO:0000250"/>
    <property type="project" value="UniProtKB"/>
</dbReference>
<dbReference type="GO" id="GO:0031514">
    <property type="term" value="C:motile cilium"/>
    <property type="evidence" value="ECO:0000314"/>
    <property type="project" value="ZFIN"/>
</dbReference>
<dbReference type="GO" id="GO:0001534">
    <property type="term" value="C:radial spoke"/>
    <property type="evidence" value="ECO:0000250"/>
    <property type="project" value="UniProtKB"/>
</dbReference>
<dbReference type="GO" id="GO:0035082">
    <property type="term" value="P:axoneme assembly"/>
    <property type="evidence" value="ECO:0000250"/>
    <property type="project" value="UniProtKB"/>
</dbReference>
<dbReference type="GO" id="GO:0003341">
    <property type="term" value="P:cilium movement"/>
    <property type="evidence" value="ECO:0000250"/>
    <property type="project" value="UniProtKB"/>
</dbReference>
<dbReference type="GO" id="GO:0003356">
    <property type="term" value="P:regulation of cilium beat frequency"/>
    <property type="evidence" value="ECO:0000250"/>
    <property type="project" value="UniProtKB"/>
</dbReference>
<dbReference type="GO" id="GO:1901317">
    <property type="term" value="P:regulation of flagellated sperm motility"/>
    <property type="evidence" value="ECO:0000250"/>
    <property type="project" value="UniProtKB"/>
</dbReference>
<dbReference type="GO" id="GO:0007288">
    <property type="term" value="P:sperm axoneme assembly"/>
    <property type="evidence" value="ECO:0000250"/>
    <property type="project" value="UniProtKB"/>
</dbReference>
<dbReference type="InterPro" id="IPR021897">
    <property type="entry name" value="FAP206"/>
</dbReference>
<dbReference type="PANTHER" id="PTHR21442">
    <property type="entry name" value="CILIA- AND FLAGELLA-ASSOCIATED PROTEIN 206"/>
    <property type="match status" value="1"/>
</dbReference>
<dbReference type="PANTHER" id="PTHR21442:SF0">
    <property type="entry name" value="CILIA- AND FLAGELLA-ASSOCIATED PROTEIN 206"/>
    <property type="match status" value="1"/>
</dbReference>
<dbReference type="Pfam" id="PF12018">
    <property type="entry name" value="FAP206"/>
    <property type="match status" value="1"/>
</dbReference>